<accession>Q984S6</accession>
<proteinExistence type="inferred from homology"/>
<evidence type="ECO:0000255" key="1">
    <source>
        <dbReference type="HAMAP-Rule" id="MF_00536"/>
    </source>
</evidence>
<feature type="chain" id="PRO_0000188820" description="4-hydroxythreonine-4-phosphate dehydrogenase">
    <location>
        <begin position="1"/>
        <end position="342"/>
    </location>
</feature>
<feature type="binding site" evidence="1">
    <location>
        <position position="139"/>
    </location>
    <ligand>
        <name>substrate</name>
    </ligand>
</feature>
<feature type="binding site" evidence="1">
    <location>
        <position position="140"/>
    </location>
    <ligand>
        <name>substrate</name>
    </ligand>
</feature>
<feature type="binding site" evidence="1">
    <location>
        <position position="174"/>
    </location>
    <ligand>
        <name>a divalent metal cation</name>
        <dbReference type="ChEBI" id="CHEBI:60240"/>
        <note>ligand shared between dimeric partners</note>
    </ligand>
</feature>
<feature type="binding site" evidence="1">
    <location>
        <position position="219"/>
    </location>
    <ligand>
        <name>a divalent metal cation</name>
        <dbReference type="ChEBI" id="CHEBI:60240"/>
        <note>ligand shared between dimeric partners</note>
    </ligand>
</feature>
<feature type="binding site" evidence="1">
    <location>
        <position position="274"/>
    </location>
    <ligand>
        <name>a divalent metal cation</name>
        <dbReference type="ChEBI" id="CHEBI:60240"/>
        <note>ligand shared between dimeric partners</note>
    </ligand>
</feature>
<feature type="binding site" evidence="1">
    <location>
        <position position="282"/>
    </location>
    <ligand>
        <name>substrate</name>
    </ligand>
</feature>
<feature type="binding site" evidence="1">
    <location>
        <position position="291"/>
    </location>
    <ligand>
        <name>substrate</name>
    </ligand>
</feature>
<feature type="binding site" evidence="1">
    <location>
        <position position="300"/>
    </location>
    <ligand>
        <name>substrate</name>
    </ligand>
</feature>
<dbReference type="EC" id="1.1.1.262" evidence="1"/>
<dbReference type="EMBL" id="BA000012">
    <property type="protein sequence ID" value="BAB54237.1"/>
    <property type="molecule type" value="Genomic_DNA"/>
</dbReference>
<dbReference type="SMR" id="Q984S6"/>
<dbReference type="KEGG" id="mlo:mll7861"/>
<dbReference type="PATRIC" id="fig|266835.9.peg.6295"/>
<dbReference type="eggNOG" id="COG1995">
    <property type="taxonomic scope" value="Bacteria"/>
</dbReference>
<dbReference type="HOGENOM" id="CLU_040168_1_0_5"/>
<dbReference type="UniPathway" id="UPA00244">
    <property type="reaction ID" value="UER00312"/>
</dbReference>
<dbReference type="Proteomes" id="UP000000552">
    <property type="component" value="Chromosome"/>
</dbReference>
<dbReference type="GO" id="GO:0005737">
    <property type="term" value="C:cytoplasm"/>
    <property type="evidence" value="ECO:0007669"/>
    <property type="project" value="UniProtKB-SubCell"/>
</dbReference>
<dbReference type="GO" id="GO:0050570">
    <property type="term" value="F:4-hydroxythreonine-4-phosphate dehydrogenase activity"/>
    <property type="evidence" value="ECO:0007669"/>
    <property type="project" value="UniProtKB-UniRule"/>
</dbReference>
<dbReference type="GO" id="GO:0050897">
    <property type="term" value="F:cobalt ion binding"/>
    <property type="evidence" value="ECO:0007669"/>
    <property type="project" value="UniProtKB-UniRule"/>
</dbReference>
<dbReference type="GO" id="GO:0000287">
    <property type="term" value="F:magnesium ion binding"/>
    <property type="evidence" value="ECO:0007669"/>
    <property type="project" value="UniProtKB-UniRule"/>
</dbReference>
<dbReference type="GO" id="GO:0051287">
    <property type="term" value="F:NAD binding"/>
    <property type="evidence" value="ECO:0007669"/>
    <property type="project" value="InterPro"/>
</dbReference>
<dbReference type="GO" id="GO:0008270">
    <property type="term" value="F:zinc ion binding"/>
    <property type="evidence" value="ECO:0007669"/>
    <property type="project" value="UniProtKB-UniRule"/>
</dbReference>
<dbReference type="GO" id="GO:0042823">
    <property type="term" value="P:pyridoxal phosphate biosynthetic process"/>
    <property type="evidence" value="ECO:0007669"/>
    <property type="project" value="UniProtKB-UniRule"/>
</dbReference>
<dbReference type="GO" id="GO:0008615">
    <property type="term" value="P:pyridoxine biosynthetic process"/>
    <property type="evidence" value="ECO:0007669"/>
    <property type="project" value="UniProtKB-UniRule"/>
</dbReference>
<dbReference type="Gene3D" id="3.40.718.10">
    <property type="entry name" value="Isopropylmalate Dehydrogenase"/>
    <property type="match status" value="1"/>
</dbReference>
<dbReference type="HAMAP" id="MF_00536">
    <property type="entry name" value="PdxA"/>
    <property type="match status" value="1"/>
</dbReference>
<dbReference type="InterPro" id="IPR037510">
    <property type="entry name" value="PdxA"/>
</dbReference>
<dbReference type="InterPro" id="IPR005255">
    <property type="entry name" value="PdxA_fam"/>
</dbReference>
<dbReference type="NCBIfam" id="TIGR00557">
    <property type="entry name" value="pdxA"/>
    <property type="match status" value="1"/>
</dbReference>
<dbReference type="NCBIfam" id="NF003699">
    <property type="entry name" value="PRK05312.1"/>
    <property type="match status" value="1"/>
</dbReference>
<dbReference type="PANTHER" id="PTHR30004">
    <property type="entry name" value="4-HYDROXYTHREONINE-4-PHOSPHATE DEHYDROGENASE"/>
    <property type="match status" value="1"/>
</dbReference>
<dbReference type="PANTHER" id="PTHR30004:SF6">
    <property type="entry name" value="D-THREONATE 4-PHOSPHATE DEHYDROGENASE"/>
    <property type="match status" value="1"/>
</dbReference>
<dbReference type="Pfam" id="PF04166">
    <property type="entry name" value="PdxA"/>
    <property type="match status" value="1"/>
</dbReference>
<dbReference type="SUPFAM" id="SSF53659">
    <property type="entry name" value="Isocitrate/Isopropylmalate dehydrogenase-like"/>
    <property type="match status" value="1"/>
</dbReference>
<protein>
    <recommendedName>
        <fullName evidence="1">4-hydroxythreonine-4-phosphate dehydrogenase</fullName>
        <ecNumber evidence="1">1.1.1.262</ecNumber>
    </recommendedName>
    <alternativeName>
        <fullName evidence="1">4-(phosphohydroxy)-L-threonine dehydrogenase</fullName>
    </alternativeName>
</protein>
<gene>
    <name evidence="1" type="primary">pdxA</name>
    <name type="ordered locus">mll7861</name>
</gene>
<sequence length="342" mass="35166">MKSAMTALALSVGDPSGIGPEIAIAAFLAREAVGLPAFYLLADPALIASRASRLGVSVPIVETTPALAAQVFARALPIVPLAARFIDSPGRPDPANAAGTVEAIDRAVAACLAGDAAAMVTCPIAKKPLYDAGFRFPGHTEYLAHLAARHSGVEAMPVMMLAGPDLRTVPVTIHIALAEVPKALTTELIVATARITAADLAGRFGIARPRLAIAGLNPHAGEGGSLGLEDEHIVRPAVDILRAEGIDAFGPLAADTLFHARARAGYDAALCMYHDQALIPAKTLAFDDAVNVTLGLPFIRTSPDHGTAFDIAGKGIARPDSLIAALKLARTLADTDKKAAAA</sequence>
<comment type="function">
    <text evidence="1">Catalyzes the NAD(P)-dependent oxidation of 4-(phosphooxy)-L-threonine (HTP) into 2-amino-3-oxo-4-(phosphooxy)butyric acid which spontaneously decarboxylates to form 3-amino-2-oxopropyl phosphate (AHAP).</text>
</comment>
<comment type="catalytic activity">
    <reaction evidence="1">
        <text>4-(phosphooxy)-L-threonine + NAD(+) = 3-amino-2-oxopropyl phosphate + CO2 + NADH</text>
        <dbReference type="Rhea" id="RHEA:32275"/>
        <dbReference type="ChEBI" id="CHEBI:16526"/>
        <dbReference type="ChEBI" id="CHEBI:57279"/>
        <dbReference type="ChEBI" id="CHEBI:57540"/>
        <dbReference type="ChEBI" id="CHEBI:57945"/>
        <dbReference type="ChEBI" id="CHEBI:58452"/>
        <dbReference type="EC" id="1.1.1.262"/>
    </reaction>
</comment>
<comment type="cofactor">
    <cofactor evidence="1">
        <name>Zn(2+)</name>
        <dbReference type="ChEBI" id="CHEBI:29105"/>
    </cofactor>
    <cofactor evidence="1">
        <name>Mg(2+)</name>
        <dbReference type="ChEBI" id="CHEBI:18420"/>
    </cofactor>
    <cofactor evidence="1">
        <name>Co(2+)</name>
        <dbReference type="ChEBI" id="CHEBI:48828"/>
    </cofactor>
    <text evidence="1">Binds 1 divalent metal cation per subunit. Can use ions such as Zn(2+), Mg(2+) or Co(2+).</text>
</comment>
<comment type="pathway">
    <text evidence="1">Cofactor biosynthesis; pyridoxine 5'-phosphate biosynthesis; pyridoxine 5'-phosphate from D-erythrose 4-phosphate: step 4/5.</text>
</comment>
<comment type="subunit">
    <text evidence="1">Homodimer.</text>
</comment>
<comment type="subcellular location">
    <subcellularLocation>
        <location evidence="1">Cytoplasm</location>
    </subcellularLocation>
</comment>
<comment type="miscellaneous">
    <text evidence="1">The active site is located at the dimer interface.</text>
</comment>
<comment type="similarity">
    <text evidence="1">Belongs to the PdxA family.</text>
</comment>
<keyword id="KW-0170">Cobalt</keyword>
<keyword id="KW-0963">Cytoplasm</keyword>
<keyword id="KW-0460">Magnesium</keyword>
<keyword id="KW-0479">Metal-binding</keyword>
<keyword id="KW-0520">NAD</keyword>
<keyword id="KW-0521">NADP</keyword>
<keyword id="KW-0560">Oxidoreductase</keyword>
<keyword id="KW-0664">Pyridoxine biosynthesis</keyword>
<keyword id="KW-0862">Zinc</keyword>
<name>PDXA_RHILO</name>
<organism>
    <name type="scientific">Mesorhizobium japonicum (strain LMG 29417 / CECT 9101 / MAFF 303099)</name>
    <name type="common">Mesorhizobium loti (strain MAFF 303099)</name>
    <dbReference type="NCBI Taxonomy" id="266835"/>
    <lineage>
        <taxon>Bacteria</taxon>
        <taxon>Pseudomonadati</taxon>
        <taxon>Pseudomonadota</taxon>
        <taxon>Alphaproteobacteria</taxon>
        <taxon>Hyphomicrobiales</taxon>
        <taxon>Phyllobacteriaceae</taxon>
        <taxon>Mesorhizobium</taxon>
    </lineage>
</organism>
<reference key="1">
    <citation type="journal article" date="2000" name="DNA Res.">
        <title>Complete genome structure of the nitrogen-fixing symbiotic bacterium Mesorhizobium loti.</title>
        <authorList>
            <person name="Kaneko T."/>
            <person name="Nakamura Y."/>
            <person name="Sato S."/>
            <person name="Asamizu E."/>
            <person name="Kato T."/>
            <person name="Sasamoto S."/>
            <person name="Watanabe A."/>
            <person name="Idesawa K."/>
            <person name="Ishikawa A."/>
            <person name="Kawashima K."/>
            <person name="Kimura T."/>
            <person name="Kishida Y."/>
            <person name="Kiyokawa C."/>
            <person name="Kohara M."/>
            <person name="Matsumoto M."/>
            <person name="Matsuno A."/>
            <person name="Mochizuki Y."/>
            <person name="Nakayama S."/>
            <person name="Nakazaki N."/>
            <person name="Shimpo S."/>
            <person name="Sugimoto M."/>
            <person name="Takeuchi C."/>
            <person name="Yamada M."/>
            <person name="Tabata S."/>
        </authorList>
    </citation>
    <scope>NUCLEOTIDE SEQUENCE [LARGE SCALE GENOMIC DNA]</scope>
    <source>
        <strain>LMG 29417 / CECT 9101 / MAFF 303099</strain>
    </source>
</reference>